<reference key="1">
    <citation type="journal article" date="1999" name="Toxicon">
        <title>Three toxins with phospholipase activity isolated from the yellow-legged hornet (Vespa verutina) venom.</title>
        <authorList>
            <person name="Ho C.L."/>
            <person name="Lin Y.L."/>
            <person name="Li S.F."/>
        </authorList>
    </citation>
    <scope>PROTEIN SEQUENCE</scope>
    <scope>FUNCTION</scope>
    <scope>CATALYTIC ACTIVITY</scope>
    <scope>ACTIVITY REGULATION</scope>
    <scope>TOXIC DOSE</scope>
    <scope>MASS SPECTROMETRY</scope>
    <scope>SUBCELLULAR LOCATION</scope>
    <source>
        <tissue>Venom</tissue>
    </source>
</reference>
<keyword id="KW-0020">Allergen</keyword>
<keyword id="KW-0204">Cytolysis</keyword>
<keyword id="KW-0903">Direct protein sequencing</keyword>
<keyword id="KW-1015">Disulfide bond</keyword>
<keyword id="KW-0354">Hemolysis</keyword>
<keyword id="KW-0378">Hydrolase</keyword>
<keyword id="KW-0442">Lipid degradation</keyword>
<keyword id="KW-0443">Lipid metabolism</keyword>
<keyword id="KW-0964">Secreted</keyword>
<proteinExistence type="evidence at protein level"/>
<comment type="function">
    <text evidence="2">Catalyzes the hydrolysis of glycerophospholipids such as phosphatidylcholine (1,2-diacyl-sn-glycero-3-phosphocholine) and has a moderate activity to hydrolyze lysoglycerophospholipids such as lysophosphatidylcholine (1-acyl-sn-glycero-3-phosphocholine), but is unable to hydrolyze sphingomyelin. In addition to acting as an allergen, it possesses a potent hemolytic activity on red blood cells of mice (99.3% of hemolysis at 3.0 ug/ml).</text>
</comment>
<comment type="catalytic activity">
    <reaction evidence="2">
        <text>a 1,2-diacyl-sn-glycero-3-phosphocholine + H2O = a 2-acyl-sn-glycero-3-phosphocholine + a fatty acid + H(+)</text>
        <dbReference type="Rhea" id="RHEA:18689"/>
        <dbReference type="ChEBI" id="CHEBI:15377"/>
        <dbReference type="ChEBI" id="CHEBI:15378"/>
        <dbReference type="ChEBI" id="CHEBI:28868"/>
        <dbReference type="ChEBI" id="CHEBI:57643"/>
        <dbReference type="ChEBI" id="CHEBI:57875"/>
        <dbReference type="EC" id="3.1.1.32"/>
    </reaction>
    <physiologicalReaction direction="left-to-right" evidence="2">
        <dbReference type="Rhea" id="RHEA:18690"/>
    </physiologicalReaction>
</comment>
<comment type="catalytic activity">
    <reaction evidence="2">
        <text>1-(9Z-octadecenoyl)-2-hexadecanoyl-sn-glycero-3-phosphocholine + H2O = 2-hexadecanoyl-sn-glycero-3-phosphocholine + (9Z)-octadecenoate + H(+)</text>
        <dbReference type="Rhea" id="RHEA:38787"/>
        <dbReference type="ChEBI" id="CHEBI:15377"/>
        <dbReference type="ChEBI" id="CHEBI:15378"/>
        <dbReference type="ChEBI" id="CHEBI:30823"/>
        <dbReference type="ChEBI" id="CHEBI:74667"/>
        <dbReference type="ChEBI" id="CHEBI:76078"/>
    </reaction>
    <physiologicalReaction direction="left-to-right" evidence="2">
        <dbReference type="Rhea" id="RHEA:38788"/>
    </physiologicalReaction>
</comment>
<comment type="catalytic activity">
    <reaction evidence="2">
        <text>a 1-acyl-sn-glycero-3-phosphocholine + H2O = sn-glycerol 3-phosphocholine + a fatty acid + H(+)</text>
        <dbReference type="Rhea" id="RHEA:15177"/>
        <dbReference type="ChEBI" id="CHEBI:15377"/>
        <dbReference type="ChEBI" id="CHEBI:15378"/>
        <dbReference type="ChEBI" id="CHEBI:16870"/>
        <dbReference type="ChEBI" id="CHEBI:28868"/>
        <dbReference type="ChEBI" id="CHEBI:58168"/>
        <dbReference type="EC" id="3.1.1.5"/>
    </reaction>
    <physiologicalReaction direction="left-to-right" evidence="2">
        <dbReference type="Rhea" id="RHEA:15178"/>
    </physiologicalReaction>
</comment>
<comment type="activity regulation">
    <text evidence="2">Activity is maximal in the presence of calcium. However, unlike phospholipases A2 whose catalytic activity is strictly calcium-dependent, this enzyme shows considerable catalytic activity on phosphatidylcholine emulsified in calcium free solution.</text>
</comment>
<comment type="pathway">
    <text evidence="5">Phospholipid metabolism.</text>
</comment>
<comment type="subcellular location">
    <subcellularLocation>
        <location evidence="2">Secreted</location>
    </subcellularLocation>
</comment>
<comment type="tissue specificity">
    <text evidence="5">Expressed by the venom gland.</text>
</comment>
<comment type="PTM">
    <text evidence="1">Contains six disulfide bonds.</text>
</comment>
<comment type="mass spectrometry" mass="33374.0" method="Electrospray" evidence="2"/>
<comment type="allergen">
    <text evidence="5">Causes an allergic reaction in human.</text>
</comment>
<comment type="toxic dose">
    <text evidence="2">LD(50) is 0.87 mg/kg by intravenous injection into mice (tail vein).</text>
</comment>
<comment type="miscellaneous">
    <text evidence="5">Is about 0.55% of the total proteins in the venom.</text>
</comment>
<comment type="similarity">
    <text evidence="4">Belongs to the AB hydrolase superfamily. Lipase family.</text>
</comment>
<name>PA12B_VESVE</name>
<sequence length="25" mass="3012">FNPCPYSDDTVKMIILTRENKKHDF</sequence>
<accession>P0DMB8</accession>
<organism>
    <name type="scientific">Vespa velutina</name>
    <name type="common">Asian yellow-legged hornet</name>
    <dbReference type="NCBI Taxonomy" id="202808"/>
    <lineage>
        <taxon>Eukaryota</taxon>
        <taxon>Metazoa</taxon>
        <taxon>Ecdysozoa</taxon>
        <taxon>Arthropoda</taxon>
        <taxon>Hexapoda</taxon>
        <taxon>Insecta</taxon>
        <taxon>Pterygota</taxon>
        <taxon>Neoptera</taxon>
        <taxon>Endopterygota</taxon>
        <taxon>Hymenoptera</taxon>
        <taxon>Apocrita</taxon>
        <taxon>Aculeata</taxon>
        <taxon>Vespoidea</taxon>
        <taxon>Vespidae</taxon>
        <taxon>Vespinae</taxon>
        <taxon>Vespa</taxon>
    </lineage>
</organism>
<feature type="chain" id="PRO_0000425198" description="Phospholipase A1 verutoxin-2b">
    <location>
        <begin position="1"/>
        <end position="25" status="greater than"/>
    </location>
</feature>
<feature type="non-terminal residue">
    <location>
        <position position="25"/>
    </location>
</feature>
<evidence type="ECO:0000250" key="1"/>
<evidence type="ECO:0000269" key="2">
    <source>
    </source>
</evidence>
<evidence type="ECO:0000303" key="3">
    <source>
    </source>
</evidence>
<evidence type="ECO:0000305" key="4"/>
<evidence type="ECO:0000305" key="5">
    <source>
    </source>
</evidence>
<protein>
    <recommendedName>
        <fullName evidence="3">Phospholipase A1 verutoxin-2b</fullName>
        <shortName evidence="4">PLA1</shortName>
        <shortName evidence="3">VT-2b</shortName>
        <ecNumber evidence="2">3.1.1.32</ecNumber>
        <ecNumber evidence="2">3.1.1.5</ecNumber>
    </recommendedName>
</protein>
<dbReference type="EC" id="3.1.1.32" evidence="2"/>
<dbReference type="EC" id="3.1.1.5" evidence="2"/>
<dbReference type="SMR" id="P0DMB8"/>
<dbReference type="SwissLipids" id="SLP:000001987"/>
<dbReference type="GO" id="GO:0005576">
    <property type="term" value="C:extracellular region"/>
    <property type="evidence" value="ECO:0007669"/>
    <property type="project" value="UniProtKB-SubCell"/>
</dbReference>
<dbReference type="GO" id="GO:0004622">
    <property type="term" value="F:lysophospholipase activity"/>
    <property type="evidence" value="ECO:0007669"/>
    <property type="project" value="RHEA"/>
</dbReference>
<dbReference type="GO" id="GO:0008970">
    <property type="term" value="F:phospholipase A1 activity"/>
    <property type="evidence" value="ECO:0007669"/>
    <property type="project" value="UniProtKB-EC"/>
</dbReference>
<dbReference type="GO" id="GO:0031640">
    <property type="term" value="P:killing of cells of another organism"/>
    <property type="evidence" value="ECO:0007669"/>
    <property type="project" value="UniProtKB-KW"/>
</dbReference>
<dbReference type="GO" id="GO:0016042">
    <property type="term" value="P:lipid catabolic process"/>
    <property type="evidence" value="ECO:0007669"/>
    <property type="project" value="UniProtKB-KW"/>
</dbReference>